<reference key="1">
    <citation type="journal article" date="2001" name="Proc. Natl. Acad. Sci. U.S.A.">
        <title>Complete genome sequence of an M1 strain of Streptococcus pyogenes.</title>
        <authorList>
            <person name="Ferretti J.J."/>
            <person name="McShan W.M."/>
            <person name="Ajdic D.J."/>
            <person name="Savic D.J."/>
            <person name="Savic G."/>
            <person name="Lyon K."/>
            <person name="Primeaux C."/>
            <person name="Sezate S."/>
            <person name="Suvorov A.N."/>
            <person name="Kenton S."/>
            <person name="Lai H.S."/>
            <person name="Lin S.P."/>
            <person name="Qian Y."/>
            <person name="Jia H.G."/>
            <person name="Najar F.Z."/>
            <person name="Ren Q."/>
            <person name="Zhu H."/>
            <person name="Song L."/>
            <person name="White J."/>
            <person name="Yuan X."/>
            <person name="Clifton S.W."/>
            <person name="Roe B.A."/>
            <person name="McLaughlin R.E."/>
        </authorList>
    </citation>
    <scope>NUCLEOTIDE SEQUENCE [LARGE SCALE GENOMIC DNA]</scope>
    <source>
        <strain>ATCC 700294 / SF370 / Serotype M1</strain>
    </source>
</reference>
<reference key="2">
    <citation type="submission" date="2014-04" db="EMBL/GenBank/DDBJ databases">
        <authorList>
            <person name="Beres S.B."/>
            <person name="Musser J.M."/>
        </authorList>
    </citation>
    <scope>SEQUENCE REVISION TO 41</scope>
</reference>
<reference key="3">
    <citation type="journal article" date="2005" name="J. Infect. Dis.">
        <title>Evolutionary origin and emergence of a highly successful clone of serotype M1 group A Streptococcus involved multiple horizontal gene transfer events.</title>
        <authorList>
            <person name="Sumby P."/>
            <person name="Porcella S.F."/>
            <person name="Madrigal A.G."/>
            <person name="Barbian K.D."/>
            <person name="Virtaneva K."/>
            <person name="Ricklefs S.M."/>
            <person name="Sturdevant D.E."/>
            <person name="Graham M.R."/>
            <person name="Vuopio-Varkila J."/>
            <person name="Hoe N.P."/>
            <person name="Musser J.M."/>
        </authorList>
    </citation>
    <scope>NUCLEOTIDE SEQUENCE [LARGE SCALE GENOMIC DNA]</scope>
    <source>
        <strain>ATCC BAA-947 / MGAS5005 / Serotype M1</strain>
    </source>
</reference>
<gene>
    <name evidence="1" type="primary">prfA</name>
    <name type="ordered locus">SPy_1141</name>
    <name type="ordered locus">M5005_Spy0863</name>
</gene>
<dbReference type="EMBL" id="AE004092">
    <property type="protein sequence ID" value="AAK34013.2"/>
    <property type="molecule type" value="Genomic_DNA"/>
</dbReference>
<dbReference type="EMBL" id="CP000017">
    <property type="protein sequence ID" value="AAZ51481.1"/>
    <property type="molecule type" value="Genomic_DNA"/>
</dbReference>
<dbReference type="RefSeq" id="NP_269292.2">
    <property type="nucleotide sequence ID" value="NC_002737.2"/>
</dbReference>
<dbReference type="SMR" id="Q99ZP5"/>
<dbReference type="PaxDb" id="1314-HKU360_00925"/>
<dbReference type="KEGG" id="spy:SPy_1141"/>
<dbReference type="KEGG" id="spz:M5005_Spy0863"/>
<dbReference type="PATRIC" id="fig|160490.10.peg.994"/>
<dbReference type="HOGENOM" id="CLU_036856_0_1_9"/>
<dbReference type="Proteomes" id="UP000000750">
    <property type="component" value="Chromosome"/>
</dbReference>
<dbReference type="GO" id="GO:0005737">
    <property type="term" value="C:cytoplasm"/>
    <property type="evidence" value="ECO:0007669"/>
    <property type="project" value="UniProtKB-SubCell"/>
</dbReference>
<dbReference type="GO" id="GO:0016149">
    <property type="term" value="F:translation release factor activity, codon specific"/>
    <property type="evidence" value="ECO:0007669"/>
    <property type="project" value="UniProtKB-UniRule"/>
</dbReference>
<dbReference type="FunFam" id="3.30.160.20:FF:000027">
    <property type="entry name" value="Peptide chain release factor 1"/>
    <property type="match status" value="1"/>
</dbReference>
<dbReference type="FunFam" id="3.30.70.1660:FF:000002">
    <property type="entry name" value="Peptide chain release factor 1"/>
    <property type="match status" value="1"/>
</dbReference>
<dbReference type="FunFam" id="3.30.70.1660:FF:000004">
    <property type="entry name" value="Peptide chain release factor 1"/>
    <property type="match status" value="1"/>
</dbReference>
<dbReference type="Gene3D" id="3.30.160.20">
    <property type="match status" value="1"/>
</dbReference>
<dbReference type="Gene3D" id="3.30.70.1660">
    <property type="match status" value="1"/>
</dbReference>
<dbReference type="Gene3D" id="6.10.140.1950">
    <property type="match status" value="1"/>
</dbReference>
<dbReference type="HAMAP" id="MF_00093">
    <property type="entry name" value="Rel_fac_1"/>
    <property type="match status" value="1"/>
</dbReference>
<dbReference type="InterPro" id="IPR005139">
    <property type="entry name" value="PCRF"/>
</dbReference>
<dbReference type="InterPro" id="IPR000352">
    <property type="entry name" value="Pep_chain_release_fac_I"/>
</dbReference>
<dbReference type="InterPro" id="IPR045853">
    <property type="entry name" value="Pep_chain_release_fac_I_sf"/>
</dbReference>
<dbReference type="InterPro" id="IPR050057">
    <property type="entry name" value="Prokaryotic/Mito_RF"/>
</dbReference>
<dbReference type="InterPro" id="IPR004373">
    <property type="entry name" value="RF-1"/>
</dbReference>
<dbReference type="NCBIfam" id="TIGR00019">
    <property type="entry name" value="prfA"/>
    <property type="match status" value="1"/>
</dbReference>
<dbReference type="NCBIfam" id="NF001859">
    <property type="entry name" value="PRK00591.1"/>
    <property type="match status" value="1"/>
</dbReference>
<dbReference type="PANTHER" id="PTHR43804">
    <property type="entry name" value="LD18447P"/>
    <property type="match status" value="1"/>
</dbReference>
<dbReference type="PANTHER" id="PTHR43804:SF7">
    <property type="entry name" value="LD18447P"/>
    <property type="match status" value="1"/>
</dbReference>
<dbReference type="Pfam" id="PF03462">
    <property type="entry name" value="PCRF"/>
    <property type="match status" value="1"/>
</dbReference>
<dbReference type="Pfam" id="PF00472">
    <property type="entry name" value="RF-1"/>
    <property type="match status" value="1"/>
</dbReference>
<dbReference type="SMART" id="SM00937">
    <property type="entry name" value="PCRF"/>
    <property type="match status" value="1"/>
</dbReference>
<dbReference type="SUPFAM" id="SSF75620">
    <property type="entry name" value="Release factor"/>
    <property type="match status" value="1"/>
</dbReference>
<dbReference type="PROSITE" id="PS00745">
    <property type="entry name" value="RF_PROK_I"/>
    <property type="match status" value="1"/>
</dbReference>
<sequence>MNIYDQLQAVEDRYEELGELLSDPDVVSDTKRFMELSREEANTRETVTAYREYKQVIQTISDAEEMIKDASGDPELEEMAKEELKESKAAKEEYEEKLKILLLPKDPNDDKNIILEIRGAAGGDEAALFAGDLLTMYQKYAETQGWRFEVMESSVNGVGGIKEVVAMVSGQSVYSKLKYESGAHRVQRVPVTESQGRVHTSTATVLVMPEVEEVEYDIDPKDLRVDIYHASGAGGQNVNKVATAVRMVHIPTGIKVEMQEERTQQKNRDKAMKIIRARVADHFAQIAQDEQDAERKSTVGTGDRSERIRTYNFPQNRVTDHRIGLTLQKLDTILSGKMDEVIDALVMYDQTKKLESLNN</sequence>
<comment type="function">
    <text evidence="1">Peptide chain release factor 1 directs the termination of translation in response to the peptide chain termination codons UAG and UAA.</text>
</comment>
<comment type="subcellular location">
    <subcellularLocation>
        <location evidence="1">Cytoplasm</location>
    </subcellularLocation>
</comment>
<comment type="PTM">
    <text evidence="1">Methylated by PrmC. Methylation increases the termination efficiency of RF1.</text>
</comment>
<comment type="similarity">
    <text evidence="1">Belongs to the prokaryotic/mitochondrial release factor family.</text>
</comment>
<name>RF1_STRP1</name>
<protein>
    <recommendedName>
        <fullName evidence="1">Peptide chain release factor 1</fullName>
        <shortName evidence="1">RF-1</shortName>
    </recommendedName>
</protein>
<accession>Q99ZP5</accession>
<accession>Q48YU1</accession>
<keyword id="KW-0963">Cytoplasm</keyword>
<keyword id="KW-0488">Methylation</keyword>
<keyword id="KW-0648">Protein biosynthesis</keyword>
<keyword id="KW-1185">Reference proteome</keyword>
<feature type="chain" id="PRO_0000177754" description="Peptide chain release factor 1">
    <location>
        <begin position="1"/>
        <end position="359"/>
    </location>
</feature>
<feature type="modified residue" description="N5-methylglutamine" evidence="1">
    <location>
        <position position="236"/>
    </location>
</feature>
<evidence type="ECO:0000255" key="1">
    <source>
        <dbReference type="HAMAP-Rule" id="MF_00093"/>
    </source>
</evidence>
<proteinExistence type="inferred from homology"/>
<organism>
    <name type="scientific">Streptococcus pyogenes serotype M1</name>
    <dbReference type="NCBI Taxonomy" id="301447"/>
    <lineage>
        <taxon>Bacteria</taxon>
        <taxon>Bacillati</taxon>
        <taxon>Bacillota</taxon>
        <taxon>Bacilli</taxon>
        <taxon>Lactobacillales</taxon>
        <taxon>Streptococcaceae</taxon>
        <taxon>Streptococcus</taxon>
    </lineage>
</organism>